<keyword id="KW-0028">Amino-acid biosynthesis</keyword>
<keyword id="KW-0170">Cobalt</keyword>
<keyword id="KW-0220">Diaminopimelate biosynthesis</keyword>
<keyword id="KW-0378">Hydrolase</keyword>
<keyword id="KW-0457">Lysine biosynthesis</keyword>
<keyword id="KW-0479">Metal-binding</keyword>
<keyword id="KW-0862">Zinc</keyword>
<evidence type="ECO:0000255" key="1">
    <source>
        <dbReference type="HAMAP-Rule" id="MF_01690"/>
    </source>
</evidence>
<proteinExistence type="inferred from homology"/>
<name>DAPE_BURO0</name>
<accession>B1JUG2</accession>
<comment type="function">
    <text evidence="1">Catalyzes the hydrolysis of N-succinyl-L,L-diaminopimelic acid (SDAP), forming succinate and LL-2,6-diaminopimelate (DAP), an intermediate involved in the bacterial biosynthesis of lysine and meso-diaminopimelic acid, an essential component of bacterial cell walls.</text>
</comment>
<comment type="catalytic activity">
    <reaction evidence="1">
        <text>N-succinyl-(2S,6S)-2,6-diaminopimelate + H2O = (2S,6S)-2,6-diaminopimelate + succinate</text>
        <dbReference type="Rhea" id="RHEA:22608"/>
        <dbReference type="ChEBI" id="CHEBI:15377"/>
        <dbReference type="ChEBI" id="CHEBI:30031"/>
        <dbReference type="ChEBI" id="CHEBI:57609"/>
        <dbReference type="ChEBI" id="CHEBI:58087"/>
        <dbReference type="EC" id="3.5.1.18"/>
    </reaction>
</comment>
<comment type="cofactor">
    <cofactor evidence="1">
        <name>Zn(2+)</name>
        <dbReference type="ChEBI" id="CHEBI:29105"/>
    </cofactor>
    <cofactor evidence="1">
        <name>Co(2+)</name>
        <dbReference type="ChEBI" id="CHEBI:48828"/>
    </cofactor>
    <text evidence="1">Binds 2 Zn(2+) or Co(2+) ions per subunit.</text>
</comment>
<comment type="pathway">
    <text evidence="1">Amino-acid biosynthesis; L-lysine biosynthesis via DAP pathway; LL-2,6-diaminopimelate from (S)-tetrahydrodipicolinate (succinylase route): step 3/3.</text>
</comment>
<comment type="subunit">
    <text evidence="1">Homodimer.</text>
</comment>
<comment type="similarity">
    <text evidence="1">Belongs to the peptidase M20A family. DapE subfamily.</text>
</comment>
<gene>
    <name evidence="1" type="primary">dapE</name>
    <name type="ordered locus">Bcenmc03_2051</name>
</gene>
<protein>
    <recommendedName>
        <fullName evidence="1">Succinyl-diaminopimelate desuccinylase</fullName>
        <shortName evidence="1">SDAP desuccinylase</shortName>
        <ecNumber evidence="1">3.5.1.18</ecNumber>
    </recommendedName>
    <alternativeName>
        <fullName evidence="1">N-succinyl-LL-2,6-diaminoheptanedioate amidohydrolase</fullName>
    </alternativeName>
</protein>
<sequence>MSATLALTEQLIARASVTPDDQHCQQIMTERLAALGFECETIASHGVTNLWAVKRGTDGRDGKLLAFAGHTDVVPTGPLEQWTSPPFIPAHRDGKLYGRGAADMKTSLAAFVVASEEFVAVHPDHRGTIAFLITSDEEGPATDGTVKVVELLQARGERLDYCIVGEPTSTAELGDVVKNGRRGSMSGELVVKGVQGHIAYPHLAKNPIHLLAPALAELAAEQWDAGNEYFPPTTWQVSNLHAGTGATNVTPGHADLLFNFRFSTASTVEGLQARVHAILDKHGLEYTLKWSVSGLPFLTPRGELSGALEHAIRTETGITTELSTTGGTSDGRFIARICPQVIEFGPPNGSIHKIDEHIEVRFVDPLKNVYRRVLEQLIA</sequence>
<organism>
    <name type="scientific">Burkholderia orbicola (strain MC0-3)</name>
    <dbReference type="NCBI Taxonomy" id="406425"/>
    <lineage>
        <taxon>Bacteria</taxon>
        <taxon>Pseudomonadati</taxon>
        <taxon>Pseudomonadota</taxon>
        <taxon>Betaproteobacteria</taxon>
        <taxon>Burkholderiales</taxon>
        <taxon>Burkholderiaceae</taxon>
        <taxon>Burkholderia</taxon>
        <taxon>Burkholderia cepacia complex</taxon>
        <taxon>Burkholderia orbicola</taxon>
    </lineage>
</organism>
<dbReference type="EC" id="3.5.1.18" evidence="1"/>
<dbReference type="EMBL" id="CP000958">
    <property type="protein sequence ID" value="ACA91212.1"/>
    <property type="molecule type" value="Genomic_DNA"/>
</dbReference>
<dbReference type="RefSeq" id="WP_012328767.1">
    <property type="nucleotide sequence ID" value="NC_010508.1"/>
</dbReference>
<dbReference type="SMR" id="B1JUG2"/>
<dbReference type="GeneID" id="83048827"/>
<dbReference type="KEGG" id="bcm:Bcenmc03_2051"/>
<dbReference type="HOGENOM" id="CLU_021802_4_0_4"/>
<dbReference type="UniPathway" id="UPA00034">
    <property type="reaction ID" value="UER00021"/>
</dbReference>
<dbReference type="Proteomes" id="UP000002169">
    <property type="component" value="Chromosome 1"/>
</dbReference>
<dbReference type="GO" id="GO:0008777">
    <property type="term" value="F:acetylornithine deacetylase activity"/>
    <property type="evidence" value="ECO:0007669"/>
    <property type="project" value="TreeGrafter"/>
</dbReference>
<dbReference type="GO" id="GO:0050897">
    <property type="term" value="F:cobalt ion binding"/>
    <property type="evidence" value="ECO:0007669"/>
    <property type="project" value="UniProtKB-UniRule"/>
</dbReference>
<dbReference type="GO" id="GO:0009014">
    <property type="term" value="F:succinyl-diaminopimelate desuccinylase activity"/>
    <property type="evidence" value="ECO:0007669"/>
    <property type="project" value="UniProtKB-UniRule"/>
</dbReference>
<dbReference type="GO" id="GO:0008270">
    <property type="term" value="F:zinc ion binding"/>
    <property type="evidence" value="ECO:0007669"/>
    <property type="project" value="UniProtKB-UniRule"/>
</dbReference>
<dbReference type="GO" id="GO:0019877">
    <property type="term" value="P:diaminopimelate biosynthetic process"/>
    <property type="evidence" value="ECO:0007669"/>
    <property type="project" value="UniProtKB-UniRule"/>
</dbReference>
<dbReference type="GO" id="GO:0006526">
    <property type="term" value="P:L-arginine biosynthetic process"/>
    <property type="evidence" value="ECO:0007669"/>
    <property type="project" value="TreeGrafter"/>
</dbReference>
<dbReference type="GO" id="GO:0009089">
    <property type="term" value="P:lysine biosynthetic process via diaminopimelate"/>
    <property type="evidence" value="ECO:0007669"/>
    <property type="project" value="UniProtKB-UniRule"/>
</dbReference>
<dbReference type="CDD" id="cd03891">
    <property type="entry name" value="M20_DapE_proteobac"/>
    <property type="match status" value="1"/>
</dbReference>
<dbReference type="FunFam" id="3.30.70.360:FF:000011">
    <property type="entry name" value="Succinyl-diaminopimelate desuccinylase"/>
    <property type="match status" value="1"/>
</dbReference>
<dbReference type="FunFam" id="3.40.630.10:FF:000005">
    <property type="entry name" value="Succinyl-diaminopimelate desuccinylase"/>
    <property type="match status" value="1"/>
</dbReference>
<dbReference type="Gene3D" id="3.40.630.10">
    <property type="entry name" value="Zn peptidases"/>
    <property type="match status" value="2"/>
</dbReference>
<dbReference type="HAMAP" id="MF_01690">
    <property type="entry name" value="DapE"/>
    <property type="match status" value="1"/>
</dbReference>
<dbReference type="InterPro" id="IPR001261">
    <property type="entry name" value="ArgE/DapE_CS"/>
</dbReference>
<dbReference type="InterPro" id="IPR036264">
    <property type="entry name" value="Bact_exopeptidase_dim_dom"/>
</dbReference>
<dbReference type="InterPro" id="IPR005941">
    <property type="entry name" value="DapE_proteobac"/>
</dbReference>
<dbReference type="InterPro" id="IPR002933">
    <property type="entry name" value="Peptidase_M20"/>
</dbReference>
<dbReference type="InterPro" id="IPR011650">
    <property type="entry name" value="Peptidase_M20_dimer"/>
</dbReference>
<dbReference type="InterPro" id="IPR050072">
    <property type="entry name" value="Peptidase_M20A"/>
</dbReference>
<dbReference type="NCBIfam" id="TIGR01246">
    <property type="entry name" value="dapE_proteo"/>
    <property type="match status" value="1"/>
</dbReference>
<dbReference type="NCBIfam" id="NF009557">
    <property type="entry name" value="PRK13009.1"/>
    <property type="match status" value="1"/>
</dbReference>
<dbReference type="PANTHER" id="PTHR43808">
    <property type="entry name" value="ACETYLORNITHINE DEACETYLASE"/>
    <property type="match status" value="1"/>
</dbReference>
<dbReference type="PANTHER" id="PTHR43808:SF31">
    <property type="entry name" value="N-ACETYL-L-CITRULLINE DEACETYLASE"/>
    <property type="match status" value="1"/>
</dbReference>
<dbReference type="Pfam" id="PF07687">
    <property type="entry name" value="M20_dimer"/>
    <property type="match status" value="1"/>
</dbReference>
<dbReference type="Pfam" id="PF01546">
    <property type="entry name" value="Peptidase_M20"/>
    <property type="match status" value="1"/>
</dbReference>
<dbReference type="SUPFAM" id="SSF55031">
    <property type="entry name" value="Bacterial exopeptidase dimerisation domain"/>
    <property type="match status" value="1"/>
</dbReference>
<dbReference type="SUPFAM" id="SSF53187">
    <property type="entry name" value="Zn-dependent exopeptidases"/>
    <property type="match status" value="1"/>
</dbReference>
<dbReference type="PROSITE" id="PS00758">
    <property type="entry name" value="ARGE_DAPE_CPG2_1"/>
    <property type="match status" value="1"/>
</dbReference>
<feature type="chain" id="PRO_0000375499" description="Succinyl-diaminopimelate desuccinylase">
    <location>
        <begin position="1"/>
        <end position="379"/>
    </location>
</feature>
<feature type="active site" evidence="1">
    <location>
        <position position="72"/>
    </location>
</feature>
<feature type="active site" description="Proton acceptor" evidence="1">
    <location>
        <position position="137"/>
    </location>
</feature>
<feature type="binding site" evidence="1">
    <location>
        <position position="70"/>
    </location>
    <ligand>
        <name>Zn(2+)</name>
        <dbReference type="ChEBI" id="CHEBI:29105"/>
        <label>1</label>
    </ligand>
</feature>
<feature type="binding site" evidence="1">
    <location>
        <position position="103"/>
    </location>
    <ligand>
        <name>Zn(2+)</name>
        <dbReference type="ChEBI" id="CHEBI:29105"/>
        <label>1</label>
    </ligand>
</feature>
<feature type="binding site" evidence="1">
    <location>
        <position position="103"/>
    </location>
    <ligand>
        <name>Zn(2+)</name>
        <dbReference type="ChEBI" id="CHEBI:29105"/>
        <label>2</label>
    </ligand>
</feature>
<feature type="binding site" evidence="1">
    <location>
        <position position="138"/>
    </location>
    <ligand>
        <name>Zn(2+)</name>
        <dbReference type="ChEBI" id="CHEBI:29105"/>
        <label>2</label>
    </ligand>
</feature>
<feature type="binding site" evidence="1">
    <location>
        <position position="166"/>
    </location>
    <ligand>
        <name>Zn(2+)</name>
        <dbReference type="ChEBI" id="CHEBI:29105"/>
        <label>1</label>
    </ligand>
</feature>
<feature type="binding site" evidence="1">
    <location>
        <position position="352"/>
    </location>
    <ligand>
        <name>Zn(2+)</name>
        <dbReference type="ChEBI" id="CHEBI:29105"/>
        <label>2</label>
    </ligand>
</feature>
<reference key="1">
    <citation type="submission" date="2008-02" db="EMBL/GenBank/DDBJ databases">
        <title>Complete sequence of chromosome 1 of Burkholderia cenocepacia MC0-3.</title>
        <authorList>
            <person name="Copeland A."/>
            <person name="Lucas S."/>
            <person name="Lapidus A."/>
            <person name="Barry K."/>
            <person name="Bruce D."/>
            <person name="Goodwin L."/>
            <person name="Glavina del Rio T."/>
            <person name="Dalin E."/>
            <person name="Tice H."/>
            <person name="Pitluck S."/>
            <person name="Chain P."/>
            <person name="Malfatti S."/>
            <person name="Shin M."/>
            <person name="Vergez L."/>
            <person name="Schmutz J."/>
            <person name="Larimer F."/>
            <person name="Land M."/>
            <person name="Hauser L."/>
            <person name="Kyrpides N."/>
            <person name="Mikhailova N."/>
            <person name="Tiedje J."/>
            <person name="Richardson P."/>
        </authorList>
    </citation>
    <scope>NUCLEOTIDE SEQUENCE [LARGE SCALE GENOMIC DNA]</scope>
    <source>
        <strain>MC0-3</strain>
    </source>
</reference>